<name>WIPF1_RAT</name>
<organism>
    <name type="scientific">Rattus norvegicus</name>
    <name type="common">Rat</name>
    <dbReference type="NCBI Taxonomy" id="10116"/>
    <lineage>
        <taxon>Eukaryota</taxon>
        <taxon>Metazoa</taxon>
        <taxon>Chordata</taxon>
        <taxon>Craniata</taxon>
        <taxon>Vertebrata</taxon>
        <taxon>Euteleostomi</taxon>
        <taxon>Mammalia</taxon>
        <taxon>Eutheria</taxon>
        <taxon>Euarchontoglires</taxon>
        <taxon>Glires</taxon>
        <taxon>Rodentia</taxon>
        <taxon>Myomorpha</taxon>
        <taxon>Muroidea</taxon>
        <taxon>Muridae</taxon>
        <taxon>Murinae</taxon>
        <taxon>Rattus</taxon>
    </lineage>
</organism>
<proteinExistence type="evidence at protein level"/>
<keyword id="KW-0009">Actin-binding</keyword>
<keyword id="KW-0025">Alternative splicing</keyword>
<keyword id="KW-0966">Cell projection</keyword>
<keyword id="KW-0963">Cytoplasm</keyword>
<keyword id="KW-0968">Cytoplasmic vesicle</keyword>
<keyword id="KW-0206">Cytoskeleton</keyword>
<keyword id="KW-0488">Methylation</keyword>
<keyword id="KW-0597">Phosphoprotein</keyword>
<keyword id="KW-1185">Reference proteome</keyword>
<keyword id="KW-0677">Repeat</keyword>
<gene>
    <name type="primary">Wipf1</name>
    <name type="synonym">Waspip</name>
    <name type="synonym">Wip</name>
</gene>
<evidence type="ECO:0000250" key="1"/>
<evidence type="ECO:0000250" key="2">
    <source>
        <dbReference type="UniProtKB" id="O43516"/>
    </source>
</evidence>
<evidence type="ECO:0000250" key="3">
    <source>
        <dbReference type="UniProtKB" id="Q8K1I7"/>
    </source>
</evidence>
<evidence type="ECO:0000255" key="4">
    <source>
        <dbReference type="PROSITE-ProRule" id="PRU00406"/>
    </source>
</evidence>
<evidence type="ECO:0000256" key="5">
    <source>
        <dbReference type="SAM" id="MobiDB-lite"/>
    </source>
</evidence>
<evidence type="ECO:0000269" key="6">
    <source>
    </source>
</evidence>
<evidence type="ECO:0000305" key="7"/>
<evidence type="ECO:0007744" key="8">
    <source>
    </source>
</evidence>
<comment type="function">
    <text evidence="1 6">Plays a role in the reorganization of the actin cytoskeleton. Contributes with NCK1 and GRB2 in the recruitment and activation of WASL. Plays a role in the formation of cell ruffles (By similarity). May participate in regulating the subcellular localization of WASL, resulting in the disassembly of stress fibers in favor of filopodia formation.</text>
</comment>
<comment type="subunit">
    <text evidence="1 2 6">Binds to WAS within the N-terminal region, at a site distinct from the CDC42-binding site. Binds profilin and actin. Interacts with DBNL (By similarity). Binds to WASL. Interacts with DBNL. Interacts with FNBP1L (via the SH3 domain) (By similarity).</text>
</comment>
<comment type="interaction">
    <interactant intactId="EBI-6986245">
        <id>Q6IN36</id>
    </interactant>
    <interactant intactId="EBI-375655">
        <id>P31016</id>
        <label>Dlg4</label>
    </interactant>
    <organismsDiffer>false</organismsDiffer>
    <experiments>5</experiments>
</comment>
<comment type="interaction">
    <interactant intactId="EBI-6986245">
        <id>Q6IN36</id>
    </interactant>
    <interactant intactId="EBI-80070">
        <id>P21575</id>
        <label>Dnm1</label>
    </interactant>
    <organismsDiffer>false</organismsDiffer>
    <experiments>2</experiments>
</comment>
<comment type="interaction">
    <interactant intactId="EBI-6986245">
        <id>Q6IN36</id>
    </interactant>
    <interactant intactId="EBI-6142604">
        <id>O08816</id>
        <label>Wasl</label>
    </interactant>
    <organismsDiffer>false</organismsDiffer>
    <experiments>2</experiments>
</comment>
<comment type="subcellular location">
    <subcellularLocation>
        <location evidence="6">Cytoplasmic vesicle</location>
    </subcellularLocation>
    <subcellularLocation>
        <location evidence="6">Cytoplasm</location>
        <location evidence="6">Cytoskeleton</location>
    </subcellularLocation>
    <subcellularLocation>
        <location evidence="1">Cell projection</location>
        <location evidence="1">Ruffle</location>
    </subcellularLocation>
    <text>Vesicle surfaces and along actin tails. Colocalizes with actin stress fibers. When coexpressed with WASL, no longer associated with actin filaments but accumulated in perinuclear and cortical areas like WASL.</text>
</comment>
<comment type="alternative products">
    <event type="alternative splicing"/>
    <isoform>
        <id>Q6IN36-1</id>
        <name>1</name>
        <sequence type="displayed"/>
    </isoform>
    <text>A number of isoforms are produced.</text>
</comment>
<comment type="tissue specificity">
    <text>Isoforms were differentially expressed. One isoform was ubiquitously expressed, another was muscle-specific and another was expressed in the liver, heart and testis.</text>
</comment>
<comment type="similarity">
    <text evidence="7">Belongs to the verprolin family.</text>
</comment>
<reference key="1">
    <citation type="journal article" date="2002" name="J. Biol. Chem.">
        <title>The rat homologue of Wiskott-Aldrich syndrome protein (WASP)-interacting protein (WIP) associates with actin filaments, recruits N-WASP from the nucleus, and mediates mobilization of actin from stress fibers in favor of filopodia formation.</title>
        <authorList>
            <person name="Vetterkind S."/>
            <person name="Miki H."/>
            <person name="Takenawa T."/>
            <person name="Klawitz I."/>
            <person name="Scheidtmann K.-H."/>
            <person name="Preuss U."/>
        </authorList>
    </citation>
    <scope>NUCLEOTIDE SEQUENCE [MRNA]</scope>
    <scope>FUNCTION</scope>
    <scope>SUBCELLULAR LOCATION</scope>
    <scope>INTERACTION WITH WASL</scope>
    <source>
        <strain>Fischer 344</strain>
        <tissue>Brain</tissue>
    </source>
</reference>
<reference key="2">
    <citation type="journal article" date="2004" name="Genome Res.">
        <title>The status, quality, and expansion of the NIH full-length cDNA project: the Mammalian Gene Collection (MGC).</title>
        <authorList>
            <consortium name="The MGC Project Team"/>
        </authorList>
    </citation>
    <scope>NUCLEOTIDE SEQUENCE [LARGE SCALE MRNA]</scope>
    <source>
        <tissue>Lung</tissue>
    </source>
</reference>
<reference key="3">
    <citation type="journal article" date="2012" name="Nat. Commun.">
        <title>Quantitative maps of protein phosphorylation sites across 14 different rat organs and tissues.</title>
        <authorList>
            <person name="Lundby A."/>
            <person name="Secher A."/>
            <person name="Lage K."/>
            <person name="Nordsborg N.B."/>
            <person name="Dmytriyev A."/>
            <person name="Lundby C."/>
            <person name="Olsen J.V."/>
        </authorList>
    </citation>
    <scope>PHOSPHORYLATION [LARGE SCALE ANALYSIS] AT SER-324</scope>
    <scope>IDENTIFICATION BY MASS SPECTROMETRY [LARGE SCALE ANALYSIS]</scope>
</reference>
<dbReference type="EMBL" id="AJ303456">
    <property type="protein sequence ID" value="CAC22282.1"/>
    <property type="molecule type" value="mRNA"/>
</dbReference>
<dbReference type="EMBL" id="BC072475">
    <property type="protein sequence ID" value="AAH72475.1"/>
    <property type="molecule type" value="mRNA"/>
</dbReference>
<dbReference type="RefSeq" id="NP_476540.2">
    <property type="nucleotide sequence ID" value="NM_057192.2"/>
</dbReference>
<dbReference type="SMR" id="Q6IN36"/>
<dbReference type="DIP" id="DIP-42685N"/>
<dbReference type="FunCoup" id="Q6IN36">
    <property type="interactions" value="1466"/>
</dbReference>
<dbReference type="IntAct" id="Q6IN36">
    <property type="interactions" value="11"/>
</dbReference>
<dbReference type="MINT" id="Q6IN36"/>
<dbReference type="STRING" id="10116.ENSRNOP00000024922"/>
<dbReference type="GlyGen" id="Q6IN36">
    <property type="glycosylation" value="2 sites"/>
</dbReference>
<dbReference type="iPTMnet" id="Q6IN36"/>
<dbReference type="PhosphoSitePlus" id="Q6IN36"/>
<dbReference type="PaxDb" id="10116-ENSRNOP00000024922"/>
<dbReference type="GeneID" id="117538"/>
<dbReference type="KEGG" id="rno:117538"/>
<dbReference type="UCSC" id="RGD:620887">
    <molecule id="Q6IN36-1"/>
    <property type="organism name" value="rat"/>
</dbReference>
<dbReference type="AGR" id="RGD:620887"/>
<dbReference type="CTD" id="7456"/>
<dbReference type="RGD" id="620887">
    <property type="gene designation" value="Wipf1"/>
</dbReference>
<dbReference type="eggNOG" id="KOG4462">
    <property type="taxonomic scope" value="Eukaryota"/>
</dbReference>
<dbReference type="InParanoid" id="Q6IN36"/>
<dbReference type="PhylomeDB" id="Q6IN36"/>
<dbReference type="TreeFam" id="TF332135"/>
<dbReference type="Reactome" id="R-RNO-2029482">
    <property type="pathway name" value="Regulation of actin dynamics for phagocytic cup formation"/>
</dbReference>
<dbReference type="Reactome" id="R-RNO-5663213">
    <property type="pathway name" value="RHO GTPases Activate WASPs and WAVEs"/>
</dbReference>
<dbReference type="PRO" id="PR:Q6IN36"/>
<dbReference type="Proteomes" id="UP000002494">
    <property type="component" value="Unplaced"/>
</dbReference>
<dbReference type="GO" id="GO:0015629">
    <property type="term" value="C:actin cytoskeleton"/>
    <property type="evidence" value="ECO:0000266"/>
    <property type="project" value="RGD"/>
</dbReference>
<dbReference type="GO" id="GO:0005884">
    <property type="term" value="C:actin filament"/>
    <property type="evidence" value="ECO:0000314"/>
    <property type="project" value="RGD"/>
</dbReference>
<dbReference type="GO" id="GO:0031410">
    <property type="term" value="C:cytoplasmic vesicle"/>
    <property type="evidence" value="ECO:0007669"/>
    <property type="project" value="UniProtKB-KW"/>
</dbReference>
<dbReference type="GO" id="GO:0001726">
    <property type="term" value="C:ruffle"/>
    <property type="evidence" value="ECO:0007669"/>
    <property type="project" value="UniProtKB-SubCell"/>
</dbReference>
<dbReference type="GO" id="GO:0003779">
    <property type="term" value="F:actin binding"/>
    <property type="evidence" value="ECO:0007669"/>
    <property type="project" value="UniProtKB-KW"/>
</dbReference>
<dbReference type="GO" id="GO:0008093">
    <property type="term" value="F:cytoskeletal anchor activity"/>
    <property type="evidence" value="ECO:0000266"/>
    <property type="project" value="RGD"/>
</dbReference>
<dbReference type="GO" id="GO:0044183">
    <property type="term" value="F:protein folding chaperone"/>
    <property type="evidence" value="ECO:0000266"/>
    <property type="project" value="RGD"/>
</dbReference>
<dbReference type="GO" id="GO:0017124">
    <property type="term" value="F:SH3 domain binding"/>
    <property type="evidence" value="ECO:0000266"/>
    <property type="project" value="RGD"/>
</dbReference>
<dbReference type="GO" id="GO:0030036">
    <property type="term" value="P:actin cytoskeleton organization"/>
    <property type="evidence" value="ECO:0000315"/>
    <property type="project" value="RGD"/>
</dbReference>
<dbReference type="GO" id="GO:0030048">
    <property type="term" value="P:actin filament-based movement"/>
    <property type="evidence" value="ECO:0000266"/>
    <property type="project" value="RGD"/>
</dbReference>
<dbReference type="GO" id="GO:0046827">
    <property type="term" value="P:positive regulation of protein export from nucleus"/>
    <property type="evidence" value="ECO:0000314"/>
    <property type="project" value="RGD"/>
</dbReference>
<dbReference type="GO" id="GO:0051707">
    <property type="term" value="P:response to other organism"/>
    <property type="evidence" value="ECO:0000266"/>
    <property type="project" value="RGD"/>
</dbReference>
<dbReference type="CDD" id="cd22076">
    <property type="entry name" value="WH2_WAS_WASL-1"/>
    <property type="match status" value="1"/>
</dbReference>
<dbReference type="FunFam" id="2.30.29.30:FF:000294">
    <property type="entry name" value="WAS/WASL-interacting protein family member 1"/>
    <property type="match status" value="1"/>
</dbReference>
<dbReference type="Gene3D" id="2.30.29.30">
    <property type="entry name" value="Pleckstrin-homology domain (PH domain)/Phosphotyrosine-binding domain (PTB)"/>
    <property type="match status" value="1"/>
</dbReference>
<dbReference type="InterPro" id="IPR011993">
    <property type="entry name" value="PH-like_dom_sf"/>
</dbReference>
<dbReference type="InterPro" id="IPR053099">
    <property type="entry name" value="WAS/WASL-interacting_domain"/>
</dbReference>
<dbReference type="InterPro" id="IPR003124">
    <property type="entry name" value="WH2_dom"/>
</dbReference>
<dbReference type="PANTHER" id="PTHR48226">
    <property type="entry name" value="OS06G0326200 PROTEIN"/>
    <property type="match status" value="1"/>
</dbReference>
<dbReference type="PANTHER" id="PTHR48226:SF1">
    <property type="entry name" value="WAS_WASL-INTERACTING PROTEIN FAMILY MEMBER 1"/>
    <property type="match status" value="1"/>
</dbReference>
<dbReference type="Pfam" id="PF02205">
    <property type="entry name" value="WH2"/>
    <property type="match status" value="1"/>
</dbReference>
<dbReference type="SMART" id="SM00246">
    <property type="entry name" value="WH2"/>
    <property type="match status" value="1"/>
</dbReference>
<dbReference type="PROSITE" id="PS51082">
    <property type="entry name" value="WH2"/>
    <property type="match status" value="1"/>
</dbReference>
<accession>Q6IN36</accession>
<accession>Q8VDA4</accession>
<sequence length="487" mass="49751">MPVPPPPAPPPPPTFALANTEKPSLNKTEQAGRNALLSDISKGKKLKKTVTNDRSAPILDKPKGAGGGYGGGSGGGGGGGSSGGGGNFGGGGPPGLGGLFQAGMPKLRSTANRDNDSGGSRPPILPPGGRATSAKPFSSPSGPGRFPAPSPGHRSGPPEPPRNRMPPPRPDVGSKPDSLPPPVPNTPRPIPSSLHNRGSPAGLGAPRPPFPGNRGAAFGAGSVRQNLSSSSSPFPRPPLPPTPSRALDDKPPPPPPPVGNRPSMHREAVPPPPSQNSKPPVPSTPRPGAGSQAPPPPPPSRPGPPPLPPTSSDEIPRLPQRNLSLTSPTPPLPSPGRSGPLPPPPTERPPPPVRDPPGRSGPLPPPPPINRNGSTARALPATPQLPSRSGMDSPRSGPRPPLPPDRPGAGAPPPPPPSTSVRNGFQDSSCEDEWESRFYFHPISDLPPPEPYVPTTKTYPSKVARSESRSGSNRRERGAPPLPPIPR</sequence>
<protein>
    <recommendedName>
        <fullName>WAS/WASL-interacting protein family member 1</fullName>
    </recommendedName>
    <alternativeName>
        <fullName>Wiskott-Aldrich syndrome protein-interacting protein</fullName>
        <shortName>WASP-interacting protein</shortName>
    </alternativeName>
</protein>
<feature type="chain" id="PRO_0000065943" description="WAS/WASL-interacting protein family member 1">
    <location>
        <begin position="1"/>
        <end position="487"/>
    </location>
</feature>
<feature type="domain" description="WH2" evidence="4">
    <location>
        <begin position="32"/>
        <end position="49"/>
    </location>
</feature>
<feature type="repeat" description="XRSGPXPPXP motif 1">
    <location>
        <begin position="336"/>
        <end position="345"/>
    </location>
</feature>
<feature type="repeat" description="XRSGPXPPXP motif 2">
    <location>
        <begin position="358"/>
        <end position="367"/>
    </location>
</feature>
<feature type="repeat" description="XRSGPXPPXP motif 3">
    <location>
        <begin position="394"/>
        <end position="403"/>
    </location>
</feature>
<feature type="region of interest" description="Disordered" evidence="5">
    <location>
        <begin position="1"/>
        <end position="487"/>
    </location>
</feature>
<feature type="region of interest" description="Binds actin" evidence="1">
    <location>
        <begin position="45"/>
        <end position="48"/>
    </location>
</feature>
<feature type="compositionally biased region" description="Pro residues" evidence="5">
    <location>
        <begin position="1"/>
        <end position="14"/>
    </location>
</feature>
<feature type="compositionally biased region" description="Polar residues" evidence="5">
    <location>
        <begin position="21"/>
        <end position="31"/>
    </location>
</feature>
<feature type="compositionally biased region" description="Gly residues" evidence="5">
    <location>
        <begin position="64"/>
        <end position="100"/>
    </location>
</feature>
<feature type="compositionally biased region" description="Low complexity" evidence="5">
    <location>
        <begin position="136"/>
        <end position="147"/>
    </location>
</feature>
<feature type="compositionally biased region" description="Pro residues" evidence="5">
    <location>
        <begin position="157"/>
        <end position="170"/>
    </location>
</feature>
<feature type="compositionally biased region" description="Pro residues" evidence="5">
    <location>
        <begin position="178"/>
        <end position="190"/>
    </location>
</feature>
<feature type="compositionally biased region" description="Pro residues" evidence="5">
    <location>
        <begin position="234"/>
        <end position="243"/>
    </location>
</feature>
<feature type="compositionally biased region" description="Pro residues" evidence="5">
    <location>
        <begin position="269"/>
        <end position="285"/>
    </location>
</feature>
<feature type="compositionally biased region" description="Pro residues" evidence="5">
    <location>
        <begin position="293"/>
        <end position="309"/>
    </location>
</feature>
<feature type="compositionally biased region" description="Pro residues" evidence="5">
    <location>
        <begin position="328"/>
        <end position="355"/>
    </location>
</feature>
<feature type="compositionally biased region" description="Pro residues" evidence="5">
    <location>
        <begin position="397"/>
        <end position="418"/>
    </location>
</feature>
<feature type="compositionally biased region" description="Polar residues" evidence="5">
    <location>
        <begin position="419"/>
        <end position="428"/>
    </location>
</feature>
<feature type="compositionally biased region" description="Basic and acidic residues" evidence="5">
    <location>
        <begin position="464"/>
        <end position="478"/>
    </location>
</feature>
<feature type="modified residue" description="Asymmetric dimethylarginine" evidence="3">
    <location>
        <position position="33"/>
    </location>
</feature>
<feature type="modified residue" description="Omega-N-methylarginine" evidence="3">
    <location>
        <position position="121"/>
    </location>
</feature>
<feature type="modified residue" description="Omega-N-methylarginine" evidence="3">
    <location>
        <position position="130"/>
    </location>
</feature>
<feature type="modified residue" description="Phosphoserine" evidence="3">
    <location>
        <position position="138"/>
    </location>
</feature>
<feature type="modified residue" description="Phosphoserine" evidence="2">
    <location>
        <position position="222"/>
    </location>
</feature>
<feature type="modified residue" description="Phosphoserine" evidence="8">
    <location>
        <position position="324"/>
    </location>
</feature>
<feature type="modified residue" description="Phosphothreonine" evidence="2">
    <location>
        <position position="329"/>
    </location>
</feature>
<feature type="modified residue" description="Phosphoserine" evidence="2">
    <location>
        <position position="334"/>
    </location>
</feature>
<feature type="sequence conflict" description="In Ref. 2; AAH72475." evidence="7" ref="2">
    <original>S</original>
    <variation>P</variation>
    <location>
        <position position="139"/>
    </location>
</feature>